<accession>Q9NS15</accession>
<accession>O15107</accession>
<accession>Q96HB9</accession>
<accession>Q9H7K2</accession>
<accession>Q9UFN4</accession>
<name>LTBP3_HUMAN</name>
<reference key="1">
    <citation type="journal article" date="2002" name="J. Cell Sci.">
        <title>Secretion of human latent TGF-beta-binding protein-3 (LTBP-3) is dependent on co-expression of TGF-beta.</title>
        <authorList>
            <person name="Penttinen C."/>
            <person name="Saharinen J."/>
            <person name="Weikkolainen K."/>
            <person name="Hyytiainen M."/>
            <person name="Keski-Oja J."/>
        </authorList>
    </citation>
    <scope>NUCLEOTIDE SEQUENCE [MRNA]</scope>
    <scope>TISSUE SPECIFICITY</scope>
    <scope>SUBCELLULAR LOCATION</scope>
</reference>
<reference key="2">
    <citation type="submission" date="2000-08" db="EMBL/GenBank/DDBJ databases">
        <title>The nucleotide sequence of a long cDNA clone isolated from human spleen.</title>
        <authorList>
            <person name="Ohara O."/>
            <person name="Nagase T."/>
            <person name="Kikuno R."/>
            <person name="Okumura K."/>
        </authorList>
    </citation>
    <scope>NUCLEOTIDE SEQUENCE [LARGE SCALE MRNA] (ISOFORM 1)</scope>
    <source>
        <tissue>Spleen</tissue>
    </source>
</reference>
<reference key="3">
    <citation type="journal article" date="1998" name="Hepatology">
        <title>Analysis of the expression pattern of the latent transforming growth factor beta binding protein isoforms in normal and diseased human liver reveals a new splice variant missing the proteinase-sensitive hinge region.</title>
        <authorList>
            <person name="Michel K."/>
            <person name="Roth S."/>
            <person name="Trautwein C."/>
            <person name="Gong W."/>
            <person name="Flemming P."/>
            <person name="Gressner A.M."/>
        </authorList>
    </citation>
    <scope>NUCLEOTIDE SEQUENCE [MRNA] OF 394-573</scope>
    <source>
        <tissue>Liver</tissue>
    </source>
</reference>
<reference key="4">
    <citation type="journal article" date="2004" name="Genome Res.">
        <title>The status, quality, and expansion of the NIH full-length cDNA project: the Mammalian Gene Collection (MGC).</title>
        <authorList>
            <consortium name="The MGC Project Team"/>
        </authorList>
    </citation>
    <scope>NUCLEOTIDE SEQUENCE [LARGE SCALE MRNA] OF 514-1303 (ISOFORM 2)</scope>
    <source>
        <tissue>Colon</tissue>
    </source>
</reference>
<reference key="5">
    <citation type="journal article" date="2007" name="BMC Genomics">
        <title>The full-ORF clone resource of the German cDNA consortium.</title>
        <authorList>
            <person name="Bechtel S."/>
            <person name="Rosenfelder H."/>
            <person name="Duda A."/>
            <person name="Schmidt C.P."/>
            <person name="Ernst U."/>
            <person name="Wellenreuther R."/>
            <person name="Mehrle A."/>
            <person name="Schuster C."/>
            <person name="Bahr A."/>
            <person name="Bloecker H."/>
            <person name="Heubner D."/>
            <person name="Hoerlein A."/>
            <person name="Michel G."/>
            <person name="Wedler H."/>
            <person name="Koehrer K."/>
            <person name="Ottenwaelder B."/>
            <person name="Poustka A."/>
            <person name="Wiemann S."/>
            <person name="Schupp I."/>
        </authorList>
    </citation>
    <scope>NUCLEOTIDE SEQUENCE [LARGE SCALE MRNA] OF 793-1303</scope>
    <source>
        <tissue>Uterus</tissue>
    </source>
</reference>
<reference key="6">
    <citation type="journal article" date="2000" name="Mol. Biol. Cell">
        <title>Specific sequence motif of 8-Cys repeats of TGF-beta binding proteins, LTBPs, creates a hydrophobic interaction surface for binding of small latent TGF-beta.</title>
        <authorList>
            <person name="Saharinen J."/>
            <person name="Keski-Oja J."/>
        </authorList>
    </citation>
    <scope>INTERACTION WITH TGFB1</scope>
</reference>
<reference key="7">
    <citation type="journal article" date="1999" name="Cytokine Growth Factor Rev.">
        <title>Latent transforming growth factor-beta binding proteins (LTBPs) -- structural extracellular matrix proteins for targeting TGF-beta action.</title>
        <authorList>
            <person name="Saharinen J."/>
            <person name="Hyytiainen M."/>
            <person name="Taipale J."/>
            <person name="Keski-Oja J."/>
        </authorList>
    </citation>
    <scope>REVIEW</scope>
</reference>
<reference key="8">
    <citation type="journal article" date="2000" name="Biochem. J.">
        <title>The latent transforming growth factor beta binding protein (LTBP) family.</title>
        <authorList>
            <person name="Oklu R."/>
            <person name="Hesketh R."/>
        </authorList>
    </citation>
    <scope>REVIEW</scope>
</reference>
<reference key="9">
    <citation type="journal article" date="2005" name="Exp. Cell Res.">
        <title>Sequential deposition of latent TGF-beta binding proteins (LTBPs) during formation of the extracellular matrix in human lung fibroblasts.</title>
        <authorList>
            <person name="Koli K."/>
            <person name="Hyytieainen M."/>
            <person name="Ryynanen M.J."/>
            <person name="Keski-Oja J."/>
        </authorList>
    </citation>
    <scope>SUBCELLULAR LOCATION</scope>
</reference>
<reference key="10">
    <citation type="journal article" date="2016" name="Matrix Biol.">
        <title>Functional consequence of fibulin-4 missense mutations associated with vascular and skeletal abnormalities and cutis laxa.</title>
        <authorList>
            <person name="Sasaki T."/>
            <person name="Hanisch F.G."/>
            <person name="Deutzmann R."/>
            <person name="Sakai L.Y."/>
            <person name="Sakuma T."/>
            <person name="Miyamoto T."/>
            <person name="Yamamoto T."/>
            <person name="Hannappel E."/>
            <person name="Chu M.L."/>
            <person name="Lanig H."/>
            <person name="von der Mark K."/>
        </authorList>
    </citation>
    <scope>INTERACTION WITH EFEMP2</scope>
</reference>
<reference key="11">
    <citation type="journal article" date="2009" name="Am. J. Hum. Genet.">
        <title>Oligodontia is caused by mutation in LTBP3, the gene encoding latent TGF-beta binding protein 3.</title>
        <authorList>
            <person name="Noor A."/>
            <person name="Windpassinger C."/>
            <person name="Vitcu I."/>
            <person name="Orlic M."/>
            <person name="Rafiq M.A."/>
            <person name="Khalid M."/>
            <person name="Malik M.N."/>
            <person name="Ayub M."/>
            <person name="Alman B."/>
            <person name="Vincent J.B."/>
        </authorList>
    </citation>
    <scope>INVOLVEMENT IN DASS</scope>
</reference>
<reference key="12">
    <citation type="journal article" date="2016" name="J. Med. Genet.">
        <title>Mutations in LTBP3 cause acromicric dysplasia and geleophysic dysplasia.</title>
        <authorList>
            <person name="McInerney-Leo A.M."/>
            <person name="Le Goff C."/>
            <person name="Leo P.J."/>
            <person name="Kenna T.J."/>
            <person name="Keith P."/>
            <person name="Harris J.E."/>
            <person name="Steer R."/>
            <person name="Bole-Feysot C."/>
            <person name="Nitschke P."/>
            <person name="Kielty C."/>
            <person name="Brown M.A."/>
            <person name="Zankl A."/>
            <person name="Duncan E.L."/>
            <person name="Cormier-Daire V."/>
        </authorList>
    </citation>
    <scope>INVOLVEMENT IN GPHYSD3</scope>
    <scope>VARIANT GPHYSD3 CYS-696</scope>
    <scope>CHARACTERIZATION OF VARIANT GPHYSD3 CYS-696</scope>
</reference>
<feature type="signal peptide" evidence="2">
    <location>
        <begin position="1"/>
        <end position="43"/>
    </location>
</feature>
<feature type="chain" id="PRO_0000007646" description="Latent-transforming growth factor beta-binding protein 3">
    <location>
        <begin position="44"/>
        <end position="1303"/>
    </location>
</feature>
<feature type="domain" description="EGF-like 1" evidence="3">
    <location>
        <begin position="109"/>
        <end position="141"/>
    </location>
</feature>
<feature type="domain" description="TB 1" evidence="4">
    <location>
        <begin position="277"/>
        <end position="331"/>
    </location>
</feature>
<feature type="domain" description="EGF-like 2; calcium-binding" evidence="3">
    <location>
        <begin position="355"/>
        <end position="395"/>
    </location>
</feature>
<feature type="domain" description="TB 2" evidence="4">
    <location>
        <begin position="403"/>
        <end position="455"/>
    </location>
</feature>
<feature type="domain" description="EGF-like 3" evidence="3">
    <location>
        <begin position="574"/>
        <end position="615"/>
    </location>
</feature>
<feature type="domain" description="EGF-like 4; calcium-binding" evidence="3">
    <location>
        <begin position="616"/>
        <end position="659"/>
    </location>
</feature>
<feature type="domain" description="EGF-like 5; calcium-binding" evidence="3">
    <location>
        <begin position="660"/>
        <end position="702"/>
    </location>
</feature>
<feature type="domain" description="EGF-like 6; calcium-binding" evidence="3">
    <location>
        <begin position="744"/>
        <end position="784"/>
    </location>
</feature>
<feature type="domain" description="EGF-like 7; calcium-binding" evidence="3">
    <location>
        <begin position="785"/>
        <end position="825"/>
    </location>
</feature>
<feature type="domain" description="EGF-like 8; calcium-binding" evidence="3">
    <location>
        <begin position="826"/>
        <end position="865"/>
    </location>
</feature>
<feature type="domain" description="EGF-like 9; calcium-binding" evidence="3">
    <location>
        <begin position="866"/>
        <end position="908"/>
    </location>
</feature>
<feature type="domain" description="TB 3" evidence="4">
    <location>
        <begin position="917"/>
        <end position="971"/>
    </location>
</feature>
<feature type="domain" description="EGF-like 10; calcium-binding" evidence="3">
    <location>
        <begin position="993"/>
        <end position="1035"/>
    </location>
</feature>
<feature type="domain" description="EGF-like 11; calcium-binding" evidence="3">
    <location>
        <begin position="1036"/>
        <end position="1076"/>
    </location>
</feature>
<feature type="domain" description="EGF-like 12; calcium-binding" evidence="3">
    <location>
        <begin position="1082"/>
        <end position="1122"/>
    </location>
</feature>
<feature type="domain" description="TB 4" evidence="4">
    <location>
        <begin position="1136"/>
        <end position="1186"/>
    </location>
</feature>
<feature type="domain" description="EGF-like 13; calcium-binding" evidence="3">
    <location>
        <begin position="1254"/>
        <end position="1298"/>
    </location>
</feature>
<feature type="region of interest" description="Disordered" evidence="5">
    <location>
        <begin position="247"/>
        <end position="282"/>
    </location>
</feature>
<feature type="region of interest" description="Disordered" evidence="5">
    <location>
        <begin position="478"/>
        <end position="552"/>
    </location>
</feature>
<feature type="region of interest" description="Disordered" evidence="5">
    <location>
        <begin position="1188"/>
        <end position="1219"/>
    </location>
</feature>
<feature type="compositionally biased region" description="Low complexity" evidence="5">
    <location>
        <begin position="529"/>
        <end position="540"/>
    </location>
</feature>
<feature type="compositionally biased region" description="Polar residues" evidence="5">
    <location>
        <begin position="1188"/>
        <end position="1198"/>
    </location>
</feature>
<feature type="glycosylation site" description="N-linked (GlcNAc...) asparagine" evidence="2">
    <location>
        <position position="89"/>
    </location>
</feature>
<feature type="glycosylation site" description="N-linked (GlcNAc...) asparagine" evidence="2">
    <location>
        <position position="349"/>
    </location>
</feature>
<feature type="glycosylation site" description="N-linked (GlcNAc...) asparagine" evidence="2">
    <location>
        <position position="845"/>
    </location>
</feature>
<feature type="glycosylation site" description="N-linked (GlcNAc...) asparagine" evidence="2">
    <location>
        <position position="936"/>
    </location>
</feature>
<feature type="glycosylation site" description="N-linked (GlcNAc...) asparagine" evidence="2">
    <location>
        <position position="1275"/>
    </location>
</feature>
<feature type="disulfide bond" evidence="3">
    <location>
        <begin position="113"/>
        <end position="123"/>
    </location>
</feature>
<feature type="disulfide bond" evidence="3">
    <location>
        <begin position="117"/>
        <end position="129"/>
    </location>
</feature>
<feature type="disulfide bond" evidence="3">
    <location>
        <begin position="131"/>
        <end position="140"/>
    </location>
</feature>
<feature type="disulfide bond" evidence="4">
    <location>
        <begin position="279"/>
        <end position="303"/>
    </location>
</feature>
<feature type="disulfide bond" evidence="4">
    <location>
        <begin position="289"/>
        <end position="316"/>
    </location>
</feature>
<feature type="disulfide bond" evidence="4">
    <location>
        <begin position="304"/>
        <end position="319"/>
    </location>
</feature>
<feature type="disulfide bond" evidence="3">
    <location>
        <begin position="359"/>
        <end position="370"/>
    </location>
</feature>
<feature type="disulfide bond" evidence="3">
    <location>
        <begin position="365"/>
        <end position="379"/>
    </location>
</feature>
<feature type="disulfide bond" evidence="3">
    <location>
        <begin position="381"/>
        <end position="394"/>
    </location>
</feature>
<feature type="disulfide bond" evidence="4">
    <location>
        <begin position="405"/>
        <end position="428"/>
    </location>
</feature>
<feature type="disulfide bond" evidence="4">
    <location>
        <begin position="415"/>
        <end position="440"/>
    </location>
</feature>
<feature type="disulfide bond" evidence="4">
    <location>
        <begin position="429"/>
        <end position="443"/>
    </location>
</feature>
<feature type="disulfide bond" evidence="4">
    <location>
        <begin position="430"/>
        <end position="455"/>
    </location>
</feature>
<feature type="disulfide bond" evidence="3">
    <location>
        <begin position="578"/>
        <end position="590"/>
    </location>
</feature>
<feature type="disulfide bond" evidence="3">
    <location>
        <begin position="585"/>
        <end position="599"/>
    </location>
</feature>
<feature type="disulfide bond" evidence="3">
    <location>
        <begin position="601"/>
        <end position="614"/>
    </location>
</feature>
<feature type="disulfide bond" evidence="3">
    <location>
        <begin position="620"/>
        <end position="632"/>
    </location>
</feature>
<feature type="disulfide bond" evidence="3">
    <location>
        <begin position="625"/>
        <end position="641"/>
    </location>
</feature>
<feature type="disulfide bond" evidence="3">
    <location>
        <begin position="664"/>
        <end position="676"/>
    </location>
</feature>
<feature type="disulfide bond" evidence="3">
    <location>
        <begin position="670"/>
        <end position="685"/>
    </location>
</feature>
<feature type="disulfide bond" evidence="3">
    <location>
        <begin position="687"/>
        <end position="701"/>
    </location>
</feature>
<feature type="disulfide bond" evidence="3">
    <location>
        <begin position="748"/>
        <end position="759"/>
    </location>
</feature>
<feature type="disulfide bond" evidence="3">
    <location>
        <begin position="754"/>
        <end position="768"/>
    </location>
</feature>
<feature type="disulfide bond" evidence="3">
    <location>
        <begin position="770"/>
        <end position="783"/>
    </location>
</feature>
<feature type="disulfide bond" evidence="3">
    <location>
        <begin position="789"/>
        <end position="800"/>
    </location>
</feature>
<feature type="disulfide bond" evidence="3">
    <location>
        <begin position="795"/>
        <end position="809"/>
    </location>
</feature>
<feature type="disulfide bond" evidence="3">
    <location>
        <begin position="811"/>
        <end position="824"/>
    </location>
</feature>
<feature type="disulfide bond" evidence="3">
    <location>
        <begin position="830"/>
        <end position="841"/>
    </location>
</feature>
<feature type="disulfide bond" evidence="3">
    <location>
        <begin position="836"/>
        <end position="850"/>
    </location>
</feature>
<feature type="disulfide bond" evidence="3">
    <location>
        <begin position="852"/>
        <end position="864"/>
    </location>
</feature>
<feature type="disulfide bond" evidence="3">
    <location>
        <begin position="870"/>
        <end position="883"/>
    </location>
</feature>
<feature type="disulfide bond" evidence="3">
    <location>
        <begin position="877"/>
        <end position="892"/>
    </location>
</feature>
<feature type="disulfide bond" evidence="3">
    <location>
        <begin position="894"/>
        <end position="907"/>
    </location>
</feature>
<feature type="disulfide bond" evidence="4">
    <location>
        <begin position="919"/>
        <end position="942"/>
    </location>
</feature>
<feature type="disulfide bond" evidence="4">
    <location>
        <begin position="929"/>
        <end position="954"/>
    </location>
</feature>
<feature type="disulfide bond" description="Interchain (with C-33 in TGFB1); in linked form" evidence="1">
    <location>
        <position position="929"/>
    </location>
</feature>
<feature type="disulfide bond" evidence="4">
    <location>
        <begin position="943"/>
        <end position="959"/>
    </location>
</feature>
<feature type="disulfide bond" evidence="4">
    <location>
        <begin position="944"/>
        <end position="971"/>
    </location>
</feature>
<feature type="disulfide bond" description="Interchain (with C-33 in TGFB1); in linked form" evidence="1">
    <location>
        <position position="954"/>
    </location>
</feature>
<feature type="disulfide bond" evidence="3">
    <location>
        <begin position="997"/>
        <end position="1010"/>
    </location>
</feature>
<feature type="disulfide bond" evidence="3">
    <location>
        <begin position="1005"/>
        <end position="1019"/>
    </location>
</feature>
<feature type="disulfide bond" evidence="3">
    <location>
        <begin position="1021"/>
        <end position="1034"/>
    </location>
</feature>
<feature type="disulfide bond" evidence="3">
    <location>
        <begin position="1040"/>
        <end position="1051"/>
    </location>
</feature>
<feature type="disulfide bond" evidence="3">
    <location>
        <begin position="1046"/>
        <end position="1060"/>
    </location>
</feature>
<feature type="disulfide bond" evidence="3">
    <location>
        <begin position="1062"/>
        <end position="1075"/>
    </location>
</feature>
<feature type="disulfide bond" evidence="3">
    <location>
        <begin position="1086"/>
        <end position="1097"/>
    </location>
</feature>
<feature type="disulfide bond" evidence="3">
    <location>
        <begin position="1092"/>
        <end position="1106"/>
    </location>
</feature>
<feature type="disulfide bond" evidence="3">
    <location>
        <begin position="1108"/>
        <end position="1121"/>
    </location>
</feature>
<feature type="disulfide bond" evidence="4">
    <location>
        <begin position="1138"/>
        <end position="1162"/>
    </location>
</feature>
<feature type="disulfide bond" evidence="4">
    <location>
        <begin position="1148"/>
        <end position="1174"/>
    </location>
</feature>
<feature type="disulfide bond" evidence="4">
    <location>
        <begin position="1163"/>
        <end position="1177"/>
    </location>
</feature>
<feature type="disulfide bond" evidence="4">
    <location>
        <begin position="1164"/>
        <end position="1186"/>
    </location>
</feature>
<feature type="disulfide bond" evidence="3">
    <location>
        <begin position="1258"/>
        <end position="1273"/>
    </location>
</feature>
<feature type="disulfide bond" evidence="3">
    <location>
        <begin position="1268"/>
        <end position="1282"/>
    </location>
</feature>
<feature type="splice variant" id="VSP_009241" description="In isoform 2." evidence="14">
    <location>
        <begin position="1082"/>
        <end position="1128"/>
    </location>
</feature>
<feature type="sequence variant" id="VAR_080565" description="In GPHYSD3; uncertain significance; no effect on TGF-beta secretion; dbSNP:rs1554974135." evidence="10">
    <original>S</original>
    <variation>C</variation>
    <location>
        <position position="696"/>
    </location>
</feature>
<feature type="sequence conflict" description="In Ref. 2; BAB15767." evidence="15" ref="2">
    <location>
        <position position="35"/>
    </location>
</feature>
<feature type="sequence conflict" description="In Ref. 3; AAB64201." evidence="15" ref="3">
    <original>D</original>
    <variation>H</variation>
    <location>
        <position position="477"/>
    </location>
</feature>
<evidence type="ECO:0000250" key="1">
    <source>
        <dbReference type="UniProtKB" id="Q14766"/>
    </source>
</evidence>
<evidence type="ECO:0000255" key="2"/>
<evidence type="ECO:0000255" key="3">
    <source>
        <dbReference type="PROSITE-ProRule" id="PRU00076"/>
    </source>
</evidence>
<evidence type="ECO:0000255" key="4">
    <source>
        <dbReference type="PROSITE-ProRule" id="PRU00697"/>
    </source>
</evidence>
<evidence type="ECO:0000256" key="5">
    <source>
        <dbReference type="SAM" id="MobiDB-lite"/>
    </source>
</evidence>
<evidence type="ECO:0000269" key="6">
    <source>
    </source>
</evidence>
<evidence type="ECO:0000269" key="7">
    <source>
    </source>
</evidence>
<evidence type="ECO:0000269" key="8">
    <source>
    </source>
</evidence>
<evidence type="ECO:0000269" key="9">
    <source>
    </source>
</evidence>
<evidence type="ECO:0000269" key="10">
    <source>
    </source>
</evidence>
<evidence type="ECO:0000269" key="11">
    <source>
    </source>
</evidence>
<evidence type="ECO:0000303" key="12">
    <source>
    </source>
</evidence>
<evidence type="ECO:0000303" key="13">
    <source>
    </source>
</evidence>
<evidence type="ECO:0000303" key="14">
    <source>
    </source>
</evidence>
<evidence type="ECO:0000305" key="15"/>
<gene>
    <name type="primary">LTBP3</name>
</gene>
<comment type="function">
    <text evidence="12 13">Key regulator of transforming growth factor beta (TGFB1, TGFB2 and TGFB3) that controls TGF-beta activation by maintaining it in a latent state during storage in extracellular space. Associates specifically via disulfide bonds with the Latency-associated peptide (LAP), which is the regulatory chain of TGF-beta, and regulates integrin-dependent activation of TGF-beta.</text>
</comment>
<comment type="subunit">
    <text evidence="6 11">Forms part of the large latent transforming growth factor beta precursor complex; removal is essential for activation of complex. Interacts with EFEMP2 (PubMed:27339457).</text>
</comment>
<comment type="subcellular location">
    <subcellularLocation>
        <location evidence="7">Secreted</location>
    </subcellularLocation>
    <subcellularLocation>
        <location evidence="8">Secreted</location>
        <location evidence="8">Extracellular space</location>
        <location evidence="8">Extracellular matrix</location>
    </subcellularLocation>
    <text evidence="7">Secretion occurs after coexpression with TGFB1 and requires complexing with 'Cys-33' of the TGFB1 propeptide.</text>
</comment>
<comment type="alternative products">
    <event type="alternative splicing"/>
    <isoform>
        <id>Q9NS15-1</id>
        <name>1</name>
        <sequence type="displayed"/>
    </isoform>
    <isoform>
        <id>Q9NS15-2</id>
        <name>2</name>
        <sequence type="described" ref="VSP_009241"/>
    </isoform>
</comment>
<comment type="tissue specificity">
    <text evidence="7">Isoform 2: Expressed prominently in heart, skeletal muscle, prostate, testis, small intestine and ovary (PubMed:12154076). Isoform 1: Strongly expressed in pancreas and liver (PubMed:12154076).</text>
</comment>
<comment type="PTM">
    <text evidence="1">Contains hydroxylated asparagine residues.</text>
</comment>
<comment type="PTM">
    <text evidence="1">Two intrachain disulfide bonds from the TB3 domain are rearranged upon TGFB1 binding, and form interchain bonds with TGFB1 propeptide, anchoring it to the extracellular matrix.</text>
</comment>
<comment type="disease" evidence="9">
    <disease id="DI-02717">
        <name>Dental anomalies and short stature</name>
        <acronym>DASS</acronym>
        <description>A disorder characterized by hypoplastic amelogenesis imperfecta, significant short stature, brachyolmia-like anomalies including platyspondyly with short pedicles, narrow intervertebral and interpedicular distances, rectangular-shaped vertebrae with posterior scalloping and herniation of the nuclei, and broad femoral necks. Dental anomalies include widely spaced, small, yellow teeth, oligodontia, and severely reduced to absent enamel.</description>
        <dbReference type="MIM" id="601216"/>
    </disease>
    <text>The disease is caused by variants affecting the gene represented in this entry.</text>
</comment>
<comment type="disease" evidence="10">
    <disease id="DI-05159">
        <name>Geleophysic dysplasia 3</name>
        <acronym>GPHYSD3</acronym>
        <description>A form of geleophysic dysplasia, a rare skeletal disease characterized by severe short stature, short hands and feet, and joint limitations. Radiologic features include delayed bone age, cone-shaped epiphyses, shortened long tubular bones, and ovoid vertebral bodies. Affected individuals have characteristic facial features including a 'happy' face with full cheeks, shortened nose, hypertelorism, long and flat philtrum, and thin upper lip. Other distinctive features include skin thickening, progressive cardiac valvular thickening often leading to an early death, toe walking, tracheal stenosis, respiratory insufficiency, and lysosomal-like storage vacuoles in various tissues. GPHYSD3 inheritance is autosomal dominant.</description>
        <dbReference type="MIM" id="617809"/>
    </disease>
    <text>The disease is caused by variants affecting the gene represented in this entry.</text>
</comment>
<comment type="similarity">
    <text evidence="15">Belongs to the LTBP family.</text>
</comment>
<comment type="sequence caution" evidence="15">
    <conflict type="erroneous initiation">
        <sequence resource="EMBL-CDS" id="BAB15767"/>
    </conflict>
</comment>
<protein>
    <recommendedName>
        <fullName>Latent-transforming growth factor beta-binding protein 3</fullName>
        <shortName>LTBP-3</shortName>
    </recommendedName>
</protein>
<sequence>MPGPRGAAGGLAPEMRGAGAAGLLALLLLLLLLLLGLGGRVEGGPAGERGAGGGGALARERFKVVFAPVICKRTCLKGQCRDSCQQGSNMTLIGENGHSTDTLTGSGFRVVVCPLPCMNGGQCSSRNQCLCPPDFTGRFCQVPAGGAGGGTGGSGPGLSRTGALSTGALPPLAPEGDSVASKHAIYAVQVIADPPGPGEGPPAQHAAFLVPLGPGQISAEVQAPPPVVNVRVHHPPEASVQVHRIESSNAESAAPSQHLLPHPKPSHPRPPTQKPLGRCFQDTLPKQPCGSNPLPGLTKQEDCCGSIGTAWGQSKCHKCPQLQYTGVQKPGPVRGEVGADCPQGYKRLNSTHCQDINECAMPGVCRHGDCLNNPGSYRCVCPPGHSLGPSRTQCIADKPEEKSLCFRLVSPEHQCQHPLTTRLTRQLCCCSVGKAWGARCQRCPTDGTAAFKEICPAGKGYHILTSHQTLTIQGESDFSLFLHPDGPPKPQQLPESPSQAPPPEDTEEERGVTTDSPVSEERSVQQSHPTATTTPARPYPELISRPSPPTMRWFLPDLPPSRSAVEIAPTQVTETDECRLNQNICGHGECVPGPPDYSCHCNPGYRSHPQHRYCVDVNECEAEPCGPGRGICMNTGGSYNCHCNRGYRLHVGAGGRSCVDLNECAKPHLCGDGGFCINFPGHYKCNCYPGYRLKASRPPVCEDIDECRDPSSCPDGKCENKPGSFKCIACQPGYRSQGGGACRDVNECAEGSPCSPGWCENLPGSFRCTCAQGYAPAPDGRSCLDVDECEAGDVCDNGICSNTPGSFQCQCLSGYHLSRDRSHCEDIDECDFPAACIGGDCINTNGSYRCLCPQGHRLVGGRKCQDIDECSQDPSLCLPHGACKNLQGSYVCVCDEGFTPTQDQHGCEEVEQPHHKKECYLNFDDTVFCDSVLATNVTQQECCCSLGAGWGDHCEIYPCPVYSSAEFHSLCPDGKGYTQDNNIVNYGIPAHRDIDECMLFGSEICKEGKCVNTQPGYECYCKQGFYYDGNLLECVDVDECLDESNCRNGVCENTRGGYRCACTPPAEYSPAQRQCLSPEEMDVDECQDPAACRPGRCVNLPGSYRCECRPPWVPGPSGRDCQLPESPAERAPERRDVCWSQRGEDGMCAGPLAGPALTFDDCCCRQGRGWGAQCRPCPPRGAGSHCPTSQSESNSFWDTSPLLLGKPPRDEDSSEEDSDECRCVSGRCVPRPGGAVCECPGGFQLDASRARCVDIDECRELNQRGLLCKSERCVNTSGSFRCVCKAGFARSRPHGACVPQRRR</sequence>
<dbReference type="EMBL" id="AF135960">
    <property type="protein sequence ID" value="AAF62352.3"/>
    <property type="molecule type" value="mRNA"/>
</dbReference>
<dbReference type="EMBL" id="AK024477">
    <property type="protein sequence ID" value="BAB15767.1"/>
    <property type="status" value="ALT_INIT"/>
    <property type="molecule type" value="mRNA"/>
</dbReference>
<dbReference type="EMBL" id="AF011407">
    <property type="protein sequence ID" value="AAB64201.1"/>
    <property type="molecule type" value="mRNA"/>
</dbReference>
<dbReference type="EMBL" id="BC008761">
    <property type="protein sequence ID" value="AAH08761.2"/>
    <property type="molecule type" value="mRNA"/>
</dbReference>
<dbReference type="EMBL" id="AL117551">
    <property type="protein sequence ID" value="CAB55988.1"/>
    <property type="molecule type" value="mRNA"/>
</dbReference>
<dbReference type="CCDS" id="CCDS44647.1">
    <molecule id="Q9NS15-1"/>
</dbReference>
<dbReference type="CCDS" id="CCDS8103.1">
    <molecule id="Q9NS15-2"/>
</dbReference>
<dbReference type="PIR" id="T17298">
    <property type="entry name" value="T17298"/>
</dbReference>
<dbReference type="RefSeq" id="NP_001123616.1">
    <molecule id="Q9NS15-1"/>
    <property type="nucleotide sequence ID" value="NM_001130144.3"/>
</dbReference>
<dbReference type="RefSeq" id="NP_001157738.1">
    <property type="nucleotide sequence ID" value="NM_001164266.1"/>
</dbReference>
<dbReference type="RefSeq" id="NP_066548.2">
    <molecule id="Q9NS15-2"/>
    <property type="nucleotide sequence ID" value="NM_021070.4"/>
</dbReference>
<dbReference type="BioGRID" id="110232">
    <property type="interactions" value="51"/>
</dbReference>
<dbReference type="FunCoup" id="Q9NS15">
    <property type="interactions" value="131"/>
</dbReference>
<dbReference type="IntAct" id="Q9NS15">
    <property type="interactions" value="20"/>
</dbReference>
<dbReference type="MINT" id="Q9NS15"/>
<dbReference type="STRING" id="9606.ENSP00000301873"/>
<dbReference type="GlyCosmos" id="Q9NS15">
    <property type="glycosylation" value="9 sites, 2 glycans"/>
</dbReference>
<dbReference type="GlyGen" id="Q9NS15">
    <property type="glycosylation" value="19 sites, 3 N-linked glycans (2 sites), 4 O-linked glycans (13 sites)"/>
</dbReference>
<dbReference type="iPTMnet" id="Q9NS15"/>
<dbReference type="PhosphoSitePlus" id="Q9NS15"/>
<dbReference type="BioMuta" id="LTBP3"/>
<dbReference type="DMDM" id="116242623"/>
<dbReference type="jPOST" id="Q9NS15"/>
<dbReference type="MassIVE" id="Q9NS15"/>
<dbReference type="PaxDb" id="9606-ENSP00000301873"/>
<dbReference type="PeptideAtlas" id="Q9NS15"/>
<dbReference type="ProteomicsDB" id="82461">
    <molecule id="Q9NS15-1"/>
</dbReference>
<dbReference type="ProteomicsDB" id="82462">
    <molecule id="Q9NS15-2"/>
</dbReference>
<dbReference type="Antibodypedia" id="70903">
    <property type="antibodies" value="9 antibodies from 9 providers"/>
</dbReference>
<dbReference type="DNASU" id="4054"/>
<dbReference type="Ensembl" id="ENST00000301873.11">
    <molecule id="Q9NS15-1"/>
    <property type="protein sequence ID" value="ENSP00000301873.5"/>
    <property type="gene ID" value="ENSG00000168056.18"/>
</dbReference>
<dbReference type="Ensembl" id="ENST00000322147.8">
    <molecule id="Q9NS15-2"/>
    <property type="protein sequence ID" value="ENSP00000326647.4"/>
    <property type="gene ID" value="ENSG00000168056.18"/>
</dbReference>
<dbReference type="GeneID" id="4054"/>
<dbReference type="KEGG" id="hsa:4054"/>
<dbReference type="MANE-Select" id="ENST00000301873.11">
    <property type="protein sequence ID" value="ENSP00000301873.5"/>
    <property type="RefSeq nucleotide sequence ID" value="NM_001130144.3"/>
    <property type="RefSeq protein sequence ID" value="NP_001123616.1"/>
</dbReference>
<dbReference type="UCSC" id="uc001oei.4">
    <molecule id="Q9NS15-1"/>
    <property type="organism name" value="human"/>
</dbReference>
<dbReference type="AGR" id="HGNC:6716"/>
<dbReference type="CTD" id="4054"/>
<dbReference type="DisGeNET" id="4054"/>
<dbReference type="GeneCards" id="LTBP3"/>
<dbReference type="GeneReviews" id="LTBP3"/>
<dbReference type="HGNC" id="HGNC:6716">
    <property type="gene designation" value="LTBP3"/>
</dbReference>
<dbReference type="HPA" id="ENSG00000168056">
    <property type="expression patterns" value="Low tissue specificity"/>
</dbReference>
<dbReference type="MalaCards" id="LTBP3"/>
<dbReference type="MIM" id="601216">
    <property type="type" value="phenotype"/>
</dbReference>
<dbReference type="MIM" id="602090">
    <property type="type" value="gene"/>
</dbReference>
<dbReference type="MIM" id="617809">
    <property type="type" value="phenotype"/>
</dbReference>
<dbReference type="neXtProt" id="NX_Q9NS15"/>
<dbReference type="OpenTargets" id="ENSG00000168056"/>
<dbReference type="Orphanet" id="969">
    <property type="disease" value="Acromicric dysplasia"/>
</dbReference>
<dbReference type="Orphanet" id="2899">
    <property type="disease" value="Brachyolmia-amelogenesis imperfecta syndrome"/>
</dbReference>
<dbReference type="Orphanet" id="2623">
    <property type="disease" value="Geleophysic dysplasia"/>
</dbReference>
<dbReference type="PharmGKB" id="PA30479"/>
<dbReference type="VEuPathDB" id="HostDB:ENSG00000168056"/>
<dbReference type="eggNOG" id="KOG1217">
    <property type="taxonomic scope" value="Eukaryota"/>
</dbReference>
<dbReference type="GeneTree" id="ENSGT00940000160285"/>
<dbReference type="InParanoid" id="Q9NS15"/>
<dbReference type="OMA" id="QKGVRSC"/>
<dbReference type="OrthoDB" id="10045365at2759"/>
<dbReference type="PAN-GO" id="Q9NS15">
    <property type="GO annotations" value="1 GO annotation based on evolutionary models"/>
</dbReference>
<dbReference type="PhylomeDB" id="Q9NS15"/>
<dbReference type="TreeFam" id="TF317514"/>
<dbReference type="PathwayCommons" id="Q9NS15"/>
<dbReference type="Reactome" id="R-HSA-2129379">
    <property type="pathway name" value="Molecules associated with elastic fibres"/>
</dbReference>
<dbReference type="Reactome" id="R-HSA-2173789">
    <property type="pathway name" value="TGF-beta receptor signaling activates SMADs"/>
</dbReference>
<dbReference type="SignaLink" id="Q9NS15"/>
<dbReference type="BioGRID-ORCS" id="4054">
    <property type="hits" value="83 hits in 1157 CRISPR screens"/>
</dbReference>
<dbReference type="ChiTaRS" id="LTBP3">
    <property type="organism name" value="human"/>
</dbReference>
<dbReference type="GeneWiki" id="LTBP3"/>
<dbReference type="GenomeRNAi" id="4054"/>
<dbReference type="Pharos" id="Q9NS15">
    <property type="development level" value="Tbio"/>
</dbReference>
<dbReference type="PRO" id="PR:Q9NS15"/>
<dbReference type="Proteomes" id="UP000005640">
    <property type="component" value="Chromosome 11"/>
</dbReference>
<dbReference type="RNAct" id="Q9NS15">
    <property type="molecule type" value="protein"/>
</dbReference>
<dbReference type="Bgee" id="ENSG00000168056">
    <property type="expression patterns" value="Expressed in descending thoracic aorta and 191 other cell types or tissues"/>
</dbReference>
<dbReference type="ExpressionAtlas" id="Q9NS15">
    <property type="expression patterns" value="baseline and differential"/>
</dbReference>
<dbReference type="GO" id="GO:0062023">
    <property type="term" value="C:collagen-containing extracellular matrix"/>
    <property type="evidence" value="ECO:0000314"/>
    <property type="project" value="UniProtKB"/>
</dbReference>
<dbReference type="GO" id="GO:0070062">
    <property type="term" value="C:extracellular exosome"/>
    <property type="evidence" value="ECO:0007005"/>
    <property type="project" value="UniProtKB"/>
</dbReference>
<dbReference type="GO" id="GO:0005576">
    <property type="term" value="C:extracellular region"/>
    <property type="evidence" value="ECO:0007005"/>
    <property type="project" value="BHF-UCL"/>
</dbReference>
<dbReference type="GO" id="GO:0005509">
    <property type="term" value="F:calcium ion binding"/>
    <property type="evidence" value="ECO:0007669"/>
    <property type="project" value="InterPro"/>
</dbReference>
<dbReference type="GO" id="GO:0050431">
    <property type="term" value="F:transforming growth factor beta binding"/>
    <property type="evidence" value="ECO:0000353"/>
    <property type="project" value="UniProtKB"/>
</dbReference>
<dbReference type="GO" id="GO:0030282">
    <property type="term" value="P:bone mineralization"/>
    <property type="evidence" value="ECO:0007669"/>
    <property type="project" value="Ensembl"/>
</dbReference>
<dbReference type="GO" id="GO:0060349">
    <property type="term" value="P:bone morphogenesis"/>
    <property type="evidence" value="ECO:0007669"/>
    <property type="project" value="Ensembl"/>
</dbReference>
<dbReference type="GO" id="GO:0046849">
    <property type="term" value="P:bone remodeling"/>
    <property type="evidence" value="ECO:0007669"/>
    <property type="project" value="Ensembl"/>
</dbReference>
<dbReference type="GO" id="GO:0002062">
    <property type="term" value="P:chondrocyte differentiation"/>
    <property type="evidence" value="ECO:0007669"/>
    <property type="project" value="Ensembl"/>
</dbReference>
<dbReference type="GO" id="GO:0060430">
    <property type="term" value="P:lung saccule development"/>
    <property type="evidence" value="ECO:0007669"/>
    <property type="project" value="Ensembl"/>
</dbReference>
<dbReference type="GO" id="GO:0030502">
    <property type="term" value="P:negative regulation of bone mineralization"/>
    <property type="evidence" value="ECO:0007669"/>
    <property type="project" value="Ensembl"/>
</dbReference>
<dbReference type="GO" id="GO:0032331">
    <property type="term" value="P:negative regulation of chondrocyte differentiation"/>
    <property type="evidence" value="ECO:0007669"/>
    <property type="project" value="Ensembl"/>
</dbReference>
<dbReference type="GO" id="GO:0045780">
    <property type="term" value="P:positive regulation of bone resorption"/>
    <property type="evidence" value="ECO:0007669"/>
    <property type="project" value="Ensembl"/>
</dbReference>
<dbReference type="GO" id="GO:2000741">
    <property type="term" value="P:positive regulation of mesenchymal stem cell differentiation"/>
    <property type="evidence" value="ECO:0000315"/>
    <property type="project" value="UniProtKB"/>
</dbReference>
<dbReference type="GO" id="GO:1902462">
    <property type="term" value="P:positive regulation of mesenchymal stem cell proliferation"/>
    <property type="evidence" value="ECO:0000315"/>
    <property type="project" value="UniProtKB"/>
</dbReference>
<dbReference type="GO" id="GO:0007179">
    <property type="term" value="P:transforming growth factor beta receptor signaling pathway"/>
    <property type="evidence" value="ECO:0000315"/>
    <property type="project" value="UniProtKB"/>
</dbReference>
<dbReference type="CDD" id="cd00054">
    <property type="entry name" value="EGF_CA"/>
    <property type="match status" value="10"/>
</dbReference>
<dbReference type="FunFam" id="2.10.25.10:FF:000003">
    <property type="entry name" value="fibrillin-1 isoform X1"/>
    <property type="match status" value="1"/>
</dbReference>
<dbReference type="FunFam" id="2.10.25.10:FF:000068">
    <property type="entry name" value="Latent transforming growth factor beta binding protein 3"/>
    <property type="match status" value="1"/>
</dbReference>
<dbReference type="FunFam" id="2.10.25.10:FF:000349">
    <property type="entry name" value="Latent transforming growth factor beta binding protein 3"/>
    <property type="match status" value="1"/>
</dbReference>
<dbReference type="FunFam" id="3.90.290.10:FF:000015">
    <property type="entry name" value="Latent transforming growth factor beta binding protein 3"/>
    <property type="match status" value="1"/>
</dbReference>
<dbReference type="FunFam" id="2.10.25.10:FF:000019">
    <property type="entry name" value="latent-transforming growth factor beta-binding protein 1 isoform X2"/>
    <property type="match status" value="2"/>
</dbReference>
<dbReference type="FunFam" id="2.10.25.10:FF:000077">
    <property type="entry name" value="Latent-transforming growth factor beta-binding protein 3 isoform 1"/>
    <property type="match status" value="1"/>
</dbReference>
<dbReference type="FunFam" id="3.90.290.10:FF:000001">
    <property type="entry name" value="Latent-transforming growth factor beta-binding protein 3 isoform 1"/>
    <property type="match status" value="1"/>
</dbReference>
<dbReference type="FunFam" id="3.90.290.10:FF:000002">
    <property type="entry name" value="Latent-transforming growth factor beta-binding protein 3 isoform 1"/>
    <property type="match status" value="1"/>
</dbReference>
<dbReference type="FunFam" id="2.10.25.10:FF:000056">
    <property type="entry name" value="Latent-transforming growth factor beta-binding protein 3 isoform 2"/>
    <property type="match status" value="1"/>
</dbReference>
<dbReference type="FunFam" id="2.10.25.10:FF:000518">
    <property type="entry name" value="latent-transforming growth factor beta-binding protein 3 isoform X1"/>
    <property type="match status" value="1"/>
</dbReference>
<dbReference type="FunFam" id="2.10.25.10:FF:000245">
    <property type="entry name" value="latent-transforming growth factor beta-binding protein 3 isoform X2"/>
    <property type="match status" value="1"/>
</dbReference>
<dbReference type="FunFam" id="2.10.25.10:FF:000302">
    <property type="entry name" value="latent-transforming growth factor beta-binding protein 3 isoform X2"/>
    <property type="match status" value="1"/>
</dbReference>
<dbReference type="FunFam" id="2.10.25.10:FF:000303">
    <property type="entry name" value="latent-transforming growth factor beta-binding protein 3 isoform X2"/>
    <property type="match status" value="1"/>
</dbReference>
<dbReference type="FunFam" id="2.10.25.10:FF:000317">
    <property type="entry name" value="latent-transforming growth factor beta-binding protein 3 isoform X2"/>
    <property type="match status" value="1"/>
</dbReference>
<dbReference type="FunFam" id="3.90.290.10:FF:000018">
    <property type="entry name" value="latent-transforming growth factor beta-binding protein 3 isoform X2"/>
    <property type="match status" value="1"/>
</dbReference>
<dbReference type="FunFam" id="2.10.25.10:FF:000160">
    <property type="entry name" value="latent-transforming growth factor beta-binding protein 4 isoform X2"/>
    <property type="match status" value="1"/>
</dbReference>
<dbReference type="FunFam" id="2.10.25.10:FF:000024">
    <property type="entry name" value="Putative latent-transforming growth factor beta-binding protein 2"/>
    <property type="match status" value="1"/>
</dbReference>
<dbReference type="Gene3D" id="2.10.25.10">
    <property type="entry name" value="Laminin"/>
    <property type="match status" value="15"/>
</dbReference>
<dbReference type="Gene3D" id="3.90.290.10">
    <property type="entry name" value="TGF-beta binding (TB) domain"/>
    <property type="match status" value="4"/>
</dbReference>
<dbReference type="InterPro" id="IPR026823">
    <property type="entry name" value="cEGF"/>
</dbReference>
<dbReference type="InterPro" id="IPR001881">
    <property type="entry name" value="EGF-like_Ca-bd_dom"/>
</dbReference>
<dbReference type="InterPro" id="IPR013032">
    <property type="entry name" value="EGF-like_CS"/>
</dbReference>
<dbReference type="InterPro" id="IPR000742">
    <property type="entry name" value="EGF-like_dom"/>
</dbReference>
<dbReference type="InterPro" id="IPR000152">
    <property type="entry name" value="EGF-type_Asp/Asn_hydroxyl_site"/>
</dbReference>
<dbReference type="InterPro" id="IPR018097">
    <property type="entry name" value="EGF_Ca-bd_CS"/>
</dbReference>
<dbReference type="InterPro" id="IPR009030">
    <property type="entry name" value="Growth_fac_rcpt_cys_sf"/>
</dbReference>
<dbReference type="InterPro" id="IPR049883">
    <property type="entry name" value="NOTCH1_EGF-like"/>
</dbReference>
<dbReference type="InterPro" id="IPR017878">
    <property type="entry name" value="TB_dom"/>
</dbReference>
<dbReference type="InterPro" id="IPR036773">
    <property type="entry name" value="TB_dom_sf"/>
</dbReference>
<dbReference type="InterPro" id="IPR052080">
    <property type="entry name" value="vWF_C/EGF_Fibrillin"/>
</dbReference>
<dbReference type="PANTHER" id="PTHR47333:SF5">
    <property type="entry name" value="FIBRILLIN-3"/>
    <property type="match status" value="1"/>
</dbReference>
<dbReference type="PANTHER" id="PTHR47333">
    <property type="entry name" value="VON WILLEBRAND FACTOR C AND EGF DOMAIN-CONTAINING PROTEIN"/>
    <property type="match status" value="1"/>
</dbReference>
<dbReference type="Pfam" id="PF12662">
    <property type="entry name" value="cEGF"/>
    <property type="match status" value="1"/>
</dbReference>
<dbReference type="Pfam" id="PF07645">
    <property type="entry name" value="EGF_CA"/>
    <property type="match status" value="10"/>
</dbReference>
<dbReference type="Pfam" id="PF12661">
    <property type="entry name" value="hEGF"/>
    <property type="match status" value="2"/>
</dbReference>
<dbReference type="Pfam" id="PF00683">
    <property type="entry name" value="TB"/>
    <property type="match status" value="4"/>
</dbReference>
<dbReference type="SMART" id="SM00181">
    <property type="entry name" value="EGF"/>
    <property type="match status" value="15"/>
</dbReference>
<dbReference type="SMART" id="SM00179">
    <property type="entry name" value="EGF_CA"/>
    <property type="match status" value="14"/>
</dbReference>
<dbReference type="SUPFAM" id="SSF57196">
    <property type="entry name" value="EGF/Laminin"/>
    <property type="match status" value="4"/>
</dbReference>
<dbReference type="SUPFAM" id="SSF57184">
    <property type="entry name" value="Growth factor receptor domain"/>
    <property type="match status" value="4"/>
</dbReference>
<dbReference type="SUPFAM" id="SSF57581">
    <property type="entry name" value="TB module/8-cys domain"/>
    <property type="match status" value="4"/>
</dbReference>
<dbReference type="PROSITE" id="PS00010">
    <property type="entry name" value="ASX_HYDROXYL"/>
    <property type="match status" value="11"/>
</dbReference>
<dbReference type="PROSITE" id="PS00022">
    <property type="entry name" value="EGF_1"/>
    <property type="match status" value="1"/>
</dbReference>
<dbReference type="PROSITE" id="PS01186">
    <property type="entry name" value="EGF_2"/>
    <property type="match status" value="8"/>
</dbReference>
<dbReference type="PROSITE" id="PS50026">
    <property type="entry name" value="EGF_3"/>
    <property type="match status" value="13"/>
</dbReference>
<dbReference type="PROSITE" id="PS01187">
    <property type="entry name" value="EGF_CA"/>
    <property type="match status" value="12"/>
</dbReference>
<dbReference type="PROSITE" id="PS51364">
    <property type="entry name" value="TB"/>
    <property type="match status" value="4"/>
</dbReference>
<keyword id="KW-0025">Alternative splicing</keyword>
<keyword id="KW-0986">Amelogenesis imperfecta</keyword>
<keyword id="KW-0225">Disease variant</keyword>
<keyword id="KW-1015">Disulfide bond</keyword>
<keyword id="KW-0242">Dwarfism</keyword>
<keyword id="KW-0245">EGF-like domain</keyword>
<keyword id="KW-0272">Extracellular matrix</keyword>
<keyword id="KW-0325">Glycoprotein</keyword>
<keyword id="KW-0340">Growth factor binding</keyword>
<keyword id="KW-1267">Proteomics identification</keyword>
<keyword id="KW-1185">Reference proteome</keyword>
<keyword id="KW-0677">Repeat</keyword>
<keyword id="KW-0964">Secreted</keyword>
<keyword id="KW-0732">Signal</keyword>
<proteinExistence type="evidence at protein level"/>
<organism>
    <name type="scientific">Homo sapiens</name>
    <name type="common">Human</name>
    <dbReference type="NCBI Taxonomy" id="9606"/>
    <lineage>
        <taxon>Eukaryota</taxon>
        <taxon>Metazoa</taxon>
        <taxon>Chordata</taxon>
        <taxon>Craniata</taxon>
        <taxon>Vertebrata</taxon>
        <taxon>Euteleostomi</taxon>
        <taxon>Mammalia</taxon>
        <taxon>Eutheria</taxon>
        <taxon>Euarchontoglires</taxon>
        <taxon>Primates</taxon>
        <taxon>Haplorrhini</taxon>
        <taxon>Catarrhini</taxon>
        <taxon>Hominidae</taxon>
        <taxon>Homo</taxon>
    </lineage>
</organism>